<proteinExistence type="inferred from homology"/>
<protein>
    <recommendedName>
        <fullName evidence="1">N-(5'-phosphoribosyl)anthranilate isomerase</fullName>
        <shortName evidence="1">PRAI</shortName>
        <ecNumber evidence="1">5.3.1.24</ecNumber>
    </recommendedName>
</protein>
<reference key="1">
    <citation type="submission" date="2008-06" db="EMBL/GenBank/DDBJ databases">
        <title>Complete sequence of Pelodictyon phaeoclathratiforme BU-1.</title>
        <authorList>
            <consortium name="US DOE Joint Genome Institute"/>
            <person name="Lucas S."/>
            <person name="Copeland A."/>
            <person name="Lapidus A."/>
            <person name="Glavina del Rio T."/>
            <person name="Dalin E."/>
            <person name="Tice H."/>
            <person name="Bruce D."/>
            <person name="Goodwin L."/>
            <person name="Pitluck S."/>
            <person name="Schmutz J."/>
            <person name="Larimer F."/>
            <person name="Land M."/>
            <person name="Hauser L."/>
            <person name="Kyrpides N."/>
            <person name="Mikhailova N."/>
            <person name="Liu Z."/>
            <person name="Li T."/>
            <person name="Zhao F."/>
            <person name="Overmann J."/>
            <person name="Bryant D.A."/>
            <person name="Richardson P."/>
        </authorList>
    </citation>
    <scope>NUCLEOTIDE SEQUENCE [LARGE SCALE GENOMIC DNA]</scope>
    <source>
        <strain>DSM 5477 / BU-1</strain>
    </source>
</reference>
<gene>
    <name evidence="1" type="primary">trpF</name>
    <name type="ordered locus">Ppha_2096</name>
</gene>
<name>TRPF_PELPB</name>
<evidence type="ECO:0000255" key="1">
    <source>
        <dbReference type="HAMAP-Rule" id="MF_00135"/>
    </source>
</evidence>
<sequence>MTKIKICGITRLSDALESCRAGADALGFNFSSLSPRAITPERAKEIIEKLPPFVASTGIFVDQSPEEINAICRFCKLQIAQLHSEQYSPEDARAITEAKVIKVFRPEENFAVEEVFAFAEKSGINAFLFDAYRPDMAGGTGETIRASLATRIFNALGDSCYPILAGGLNESNIGEAIRSLQPYGVDTASGVECEPGIKDPVKIKAFIQAVRKTVF</sequence>
<keyword id="KW-0028">Amino-acid biosynthesis</keyword>
<keyword id="KW-0057">Aromatic amino acid biosynthesis</keyword>
<keyword id="KW-0413">Isomerase</keyword>
<keyword id="KW-1185">Reference proteome</keyword>
<keyword id="KW-0822">Tryptophan biosynthesis</keyword>
<feature type="chain" id="PRO_1000095930" description="N-(5'-phosphoribosyl)anthranilate isomerase">
    <location>
        <begin position="1"/>
        <end position="215"/>
    </location>
</feature>
<dbReference type="EC" id="5.3.1.24" evidence="1"/>
<dbReference type="EMBL" id="CP001110">
    <property type="protein sequence ID" value="ACF44303.1"/>
    <property type="molecule type" value="Genomic_DNA"/>
</dbReference>
<dbReference type="RefSeq" id="WP_012508782.1">
    <property type="nucleotide sequence ID" value="NC_011060.1"/>
</dbReference>
<dbReference type="SMR" id="B4SD44"/>
<dbReference type="STRING" id="324925.Ppha_2096"/>
<dbReference type="KEGG" id="pph:Ppha_2096"/>
<dbReference type="eggNOG" id="COG0135">
    <property type="taxonomic scope" value="Bacteria"/>
</dbReference>
<dbReference type="HOGENOM" id="CLU_076364_2_0_10"/>
<dbReference type="OrthoDB" id="9786954at2"/>
<dbReference type="UniPathway" id="UPA00035">
    <property type="reaction ID" value="UER00042"/>
</dbReference>
<dbReference type="Proteomes" id="UP000002724">
    <property type="component" value="Chromosome"/>
</dbReference>
<dbReference type="GO" id="GO:0004640">
    <property type="term" value="F:phosphoribosylanthranilate isomerase activity"/>
    <property type="evidence" value="ECO:0007669"/>
    <property type="project" value="UniProtKB-UniRule"/>
</dbReference>
<dbReference type="GO" id="GO:0000162">
    <property type="term" value="P:L-tryptophan biosynthetic process"/>
    <property type="evidence" value="ECO:0007669"/>
    <property type="project" value="UniProtKB-UniRule"/>
</dbReference>
<dbReference type="CDD" id="cd00405">
    <property type="entry name" value="PRAI"/>
    <property type="match status" value="1"/>
</dbReference>
<dbReference type="Gene3D" id="3.20.20.70">
    <property type="entry name" value="Aldolase class I"/>
    <property type="match status" value="1"/>
</dbReference>
<dbReference type="HAMAP" id="MF_00135">
    <property type="entry name" value="PRAI"/>
    <property type="match status" value="1"/>
</dbReference>
<dbReference type="InterPro" id="IPR013785">
    <property type="entry name" value="Aldolase_TIM"/>
</dbReference>
<dbReference type="InterPro" id="IPR001240">
    <property type="entry name" value="PRAI_dom"/>
</dbReference>
<dbReference type="InterPro" id="IPR011060">
    <property type="entry name" value="RibuloseP-bd_barrel"/>
</dbReference>
<dbReference type="InterPro" id="IPR044643">
    <property type="entry name" value="TrpF_fam"/>
</dbReference>
<dbReference type="PANTHER" id="PTHR42894">
    <property type="entry name" value="N-(5'-PHOSPHORIBOSYL)ANTHRANILATE ISOMERASE"/>
    <property type="match status" value="1"/>
</dbReference>
<dbReference type="PANTHER" id="PTHR42894:SF1">
    <property type="entry name" value="N-(5'-PHOSPHORIBOSYL)ANTHRANILATE ISOMERASE"/>
    <property type="match status" value="1"/>
</dbReference>
<dbReference type="Pfam" id="PF00697">
    <property type="entry name" value="PRAI"/>
    <property type="match status" value="1"/>
</dbReference>
<dbReference type="SUPFAM" id="SSF51366">
    <property type="entry name" value="Ribulose-phoshate binding barrel"/>
    <property type="match status" value="1"/>
</dbReference>
<organism>
    <name type="scientific">Pelodictyon phaeoclathratiforme (strain DSM 5477 / BU-1)</name>
    <dbReference type="NCBI Taxonomy" id="324925"/>
    <lineage>
        <taxon>Bacteria</taxon>
        <taxon>Pseudomonadati</taxon>
        <taxon>Chlorobiota</taxon>
        <taxon>Chlorobiia</taxon>
        <taxon>Chlorobiales</taxon>
        <taxon>Chlorobiaceae</taxon>
        <taxon>Chlorobium/Pelodictyon group</taxon>
        <taxon>Pelodictyon</taxon>
    </lineage>
</organism>
<accession>B4SD44</accession>
<comment type="catalytic activity">
    <reaction evidence="1">
        <text>N-(5-phospho-beta-D-ribosyl)anthranilate = 1-(2-carboxyphenylamino)-1-deoxy-D-ribulose 5-phosphate</text>
        <dbReference type="Rhea" id="RHEA:21540"/>
        <dbReference type="ChEBI" id="CHEBI:18277"/>
        <dbReference type="ChEBI" id="CHEBI:58613"/>
        <dbReference type="EC" id="5.3.1.24"/>
    </reaction>
</comment>
<comment type="pathway">
    <text evidence="1">Amino-acid biosynthesis; L-tryptophan biosynthesis; L-tryptophan from chorismate: step 3/5.</text>
</comment>
<comment type="similarity">
    <text evidence="1">Belongs to the TrpF family.</text>
</comment>